<dbReference type="EC" id="6.1.1.7" evidence="1"/>
<dbReference type="EMBL" id="CP000699">
    <property type="protein sequence ID" value="ABQ66876.1"/>
    <property type="molecule type" value="Genomic_DNA"/>
</dbReference>
<dbReference type="SMR" id="A5V3L0"/>
<dbReference type="STRING" id="392499.Swit_0508"/>
<dbReference type="PaxDb" id="392499-Swit_0508"/>
<dbReference type="KEGG" id="swi:Swit_0508"/>
<dbReference type="eggNOG" id="COG0013">
    <property type="taxonomic scope" value="Bacteria"/>
</dbReference>
<dbReference type="HOGENOM" id="CLU_004485_1_1_5"/>
<dbReference type="OrthoDB" id="9803884at2"/>
<dbReference type="Proteomes" id="UP000001989">
    <property type="component" value="Chromosome"/>
</dbReference>
<dbReference type="GO" id="GO:0005829">
    <property type="term" value="C:cytosol"/>
    <property type="evidence" value="ECO:0007669"/>
    <property type="project" value="TreeGrafter"/>
</dbReference>
<dbReference type="GO" id="GO:0004813">
    <property type="term" value="F:alanine-tRNA ligase activity"/>
    <property type="evidence" value="ECO:0007669"/>
    <property type="project" value="UniProtKB-UniRule"/>
</dbReference>
<dbReference type="GO" id="GO:0002161">
    <property type="term" value="F:aminoacyl-tRNA deacylase activity"/>
    <property type="evidence" value="ECO:0007669"/>
    <property type="project" value="TreeGrafter"/>
</dbReference>
<dbReference type="GO" id="GO:0005524">
    <property type="term" value="F:ATP binding"/>
    <property type="evidence" value="ECO:0007669"/>
    <property type="project" value="UniProtKB-UniRule"/>
</dbReference>
<dbReference type="GO" id="GO:0000049">
    <property type="term" value="F:tRNA binding"/>
    <property type="evidence" value="ECO:0007669"/>
    <property type="project" value="UniProtKB-KW"/>
</dbReference>
<dbReference type="GO" id="GO:0008270">
    <property type="term" value="F:zinc ion binding"/>
    <property type="evidence" value="ECO:0007669"/>
    <property type="project" value="UniProtKB-UniRule"/>
</dbReference>
<dbReference type="GO" id="GO:0006419">
    <property type="term" value="P:alanyl-tRNA aminoacylation"/>
    <property type="evidence" value="ECO:0007669"/>
    <property type="project" value="UniProtKB-UniRule"/>
</dbReference>
<dbReference type="GO" id="GO:0045892">
    <property type="term" value="P:negative regulation of DNA-templated transcription"/>
    <property type="evidence" value="ECO:0007669"/>
    <property type="project" value="TreeGrafter"/>
</dbReference>
<dbReference type="CDD" id="cd00673">
    <property type="entry name" value="AlaRS_core"/>
    <property type="match status" value="1"/>
</dbReference>
<dbReference type="FunFam" id="3.10.310.40:FF:000001">
    <property type="entry name" value="Alanine--tRNA ligase"/>
    <property type="match status" value="1"/>
</dbReference>
<dbReference type="FunFam" id="3.30.54.20:FF:000001">
    <property type="entry name" value="Alanine--tRNA ligase"/>
    <property type="match status" value="1"/>
</dbReference>
<dbReference type="FunFam" id="3.30.930.10:FF:000004">
    <property type="entry name" value="Alanine--tRNA ligase"/>
    <property type="match status" value="1"/>
</dbReference>
<dbReference type="FunFam" id="3.30.980.10:FF:000004">
    <property type="entry name" value="Alanine--tRNA ligase, cytoplasmic"/>
    <property type="match status" value="1"/>
</dbReference>
<dbReference type="Gene3D" id="2.40.30.130">
    <property type="match status" value="1"/>
</dbReference>
<dbReference type="Gene3D" id="3.10.310.40">
    <property type="match status" value="1"/>
</dbReference>
<dbReference type="Gene3D" id="3.30.54.20">
    <property type="match status" value="1"/>
</dbReference>
<dbReference type="Gene3D" id="6.10.250.550">
    <property type="match status" value="1"/>
</dbReference>
<dbReference type="Gene3D" id="3.30.930.10">
    <property type="entry name" value="Bira Bifunctional Protein, Domain 2"/>
    <property type="match status" value="1"/>
</dbReference>
<dbReference type="Gene3D" id="3.30.980.10">
    <property type="entry name" value="Threonyl-trna Synthetase, Chain A, domain 2"/>
    <property type="match status" value="1"/>
</dbReference>
<dbReference type="HAMAP" id="MF_00036_B">
    <property type="entry name" value="Ala_tRNA_synth_B"/>
    <property type="match status" value="1"/>
</dbReference>
<dbReference type="InterPro" id="IPR045864">
    <property type="entry name" value="aa-tRNA-synth_II/BPL/LPL"/>
</dbReference>
<dbReference type="InterPro" id="IPR002318">
    <property type="entry name" value="Ala-tRNA-lgiase_IIc"/>
</dbReference>
<dbReference type="InterPro" id="IPR018162">
    <property type="entry name" value="Ala-tRNA-ligase_IIc_anticod-bd"/>
</dbReference>
<dbReference type="InterPro" id="IPR018165">
    <property type="entry name" value="Ala-tRNA-synth_IIc_core"/>
</dbReference>
<dbReference type="InterPro" id="IPR018164">
    <property type="entry name" value="Ala-tRNA-synth_IIc_N"/>
</dbReference>
<dbReference type="InterPro" id="IPR050058">
    <property type="entry name" value="Ala-tRNA_ligase"/>
</dbReference>
<dbReference type="InterPro" id="IPR023033">
    <property type="entry name" value="Ala_tRNA_ligase_euk/bac"/>
</dbReference>
<dbReference type="InterPro" id="IPR003156">
    <property type="entry name" value="DHHA1_dom"/>
</dbReference>
<dbReference type="InterPro" id="IPR018163">
    <property type="entry name" value="Thr/Ala-tRNA-synth_IIc_edit"/>
</dbReference>
<dbReference type="InterPro" id="IPR009000">
    <property type="entry name" value="Transl_B-barrel_sf"/>
</dbReference>
<dbReference type="InterPro" id="IPR012947">
    <property type="entry name" value="tRNA_SAD"/>
</dbReference>
<dbReference type="NCBIfam" id="TIGR00344">
    <property type="entry name" value="alaS"/>
    <property type="match status" value="1"/>
</dbReference>
<dbReference type="PANTHER" id="PTHR11777:SF9">
    <property type="entry name" value="ALANINE--TRNA LIGASE, CYTOPLASMIC"/>
    <property type="match status" value="1"/>
</dbReference>
<dbReference type="PANTHER" id="PTHR11777">
    <property type="entry name" value="ALANYL-TRNA SYNTHETASE"/>
    <property type="match status" value="1"/>
</dbReference>
<dbReference type="Pfam" id="PF02272">
    <property type="entry name" value="DHHA1"/>
    <property type="match status" value="1"/>
</dbReference>
<dbReference type="Pfam" id="PF01411">
    <property type="entry name" value="tRNA-synt_2c"/>
    <property type="match status" value="1"/>
</dbReference>
<dbReference type="Pfam" id="PF07973">
    <property type="entry name" value="tRNA_SAD"/>
    <property type="match status" value="1"/>
</dbReference>
<dbReference type="PRINTS" id="PR00980">
    <property type="entry name" value="TRNASYNTHALA"/>
</dbReference>
<dbReference type="SMART" id="SM00863">
    <property type="entry name" value="tRNA_SAD"/>
    <property type="match status" value="1"/>
</dbReference>
<dbReference type="SUPFAM" id="SSF55681">
    <property type="entry name" value="Class II aaRS and biotin synthetases"/>
    <property type="match status" value="1"/>
</dbReference>
<dbReference type="SUPFAM" id="SSF101353">
    <property type="entry name" value="Putative anticodon-binding domain of alanyl-tRNA synthetase (AlaRS)"/>
    <property type="match status" value="1"/>
</dbReference>
<dbReference type="SUPFAM" id="SSF55186">
    <property type="entry name" value="ThrRS/AlaRS common domain"/>
    <property type="match status" value="1"/>
</dbReference>
<dbReference type="SUPFAM" id="SSF50447">
    <property type="entry name" value="Translation proteins"/>
    <property type="match status" value="1"/>
</dbReference>
<dbReference type="PROSITE" id="PS50860">
    <property type="entry name" value="AA_TRNA_LIGASE_II_ALA"/>
    <property type="match status" value="1"/>
</dbReference>
<accession>A5V3L0</accession>
<keyword id="KW-0030">Aminoacyl-tRNA synthetase</keyword>
<keyword id="KW-0067">ATP-binding</keyword>
<keyword id="KW-0963">Cytoplasm</keyword>
<keyword id="KW-0436">Ligase</keyword>
<keyword id="KW-0479">Metal-binding</keyword>
<keyword id="KW-0547">Nucleotide-binding</keyword>
<keyword id="KW-0648">Protein biosynthesis</keyword>
<keyword id="KW-1185">Reference proteome</keyword>
<keyword id="KW-0694">RNA-binding</keyword>
<keyword id="KW-0820">tRNA-binding</keyword>
<keyword id="KW-0862">Zinc</keyword>
<protein>
    <recommendedName>
        <fullName evidence="1">Alanine--tRNA ligase</fullName>
        <ecNumber evidence="1">6.1.1.7</ecNumber>
    </recommendedName>
    <alternativeName>
        <fullName evidence="1">Alanyl-tRNA synthetase</fullName>
        <shortName evidence="1">AlaRS</shortName>
    </alternativeName>
</protein>
<proteinExistence type="inferred from homology"/>
<sequence>MTSTNDIRRSFLDHFAKEGHELVPSAPLVPHNDPTLMFVNAGMVPFKNVFTGLEKRPYSTATSSQKCVRAGGKHNDLDNVGYTARHHTFFEMLGNFSFGDYFKERAISLAWSLITGTWGIPADRLTVTVFHTDDEAFDLWKKIGMPDSRIIRIPTSDNFWSMGDTGPCGPCSEIFYDHGAHIPGGPPGSPDEDGDRFVEIWNLVFMQYEQVDKETRIDLPRPSIDTGMGLERIAAVLQGVHDNYDTDTFKALIAASGELTRTATNGDFKASHRVIADHLRASGFLVADGVLPANEGRGYVLRRIMRRAMRHAHLLGAAEPLMHRLVPSLVAEMGAAYPELVRAQPLIEETLKLEETRFRQTLANGLRLLDEATGAMKPGDVLPGAVAFKLYDTFGFPYDLTEDALRAQDLGVDRSGFDAAMAEQKAAARAAWKGSGEKASDEVWFDIAEEFGGTEFTGYVSEEGDGQLLAIVKDGQRVAEAKAGDEVVLVTNQTPFYGESGGQMGDAGRITGDDGLEIAVEDTAKPLGRVHAHRGTVVSGSVRTGDALHLVVDGDRRTRIRANHSATHLLHAALRNRLGSHVTQKGSLVAADRFRFDFSHPKALTPEDIAAIEAEVNRHIRENDEVTTRLMTPDAAIEAGAMALFGEKYGDEVRVLSMGKAGRDLGAKSYSVELCGGTHVSALGDIALFKIISESAVSSGVRRIEALTGEAARQWLTQRDEKLKEAAAALKTAPDDVPARIAVLVEERRKLERELAEAKKALALGGGSKAEAAGPEDVAGVKFLPQVVDGLDPKGLRGLVDDAKASLGSGVSVIVAVNDGRASVAAGVTADLVDRISAVDLVKAAVAALGGQGGGGRPDMAQGGGPDGDKAADAVAAVRDALAKVPA</sequence>
<name>SYA_RHIWR</name>
<evidence type="ECO:0000255" key="1">
    <source>
        <dbReference type="HAMAP-Rule" id="MF_00036"/>
    </source>
</evidence>
<evidence type="ECO:0000256" key="2">
    <source>
        <dbReference type="SAM" id="MobiDB-lite"/>
    </source>
</evidence>
<gene>
    <name evidence="1" type="primary">alaS</name>
    <name type="ordered locus">Swit_0508</name>
</gene>
<reference key="1">
    <citation type="journal article" date="2010" name="J. Bacteriol.">
        <title>Genome sequence of the dioxin-mineralizing bacterium Sphingomonas wittichii RW1.</title>
        <authorList>
            <person name="Miller T.R."/>
            <person name="Delcher A.L."/>
            <person name="Salzberg S.L."/>
            <person name="Saunders E."/>
            <person name="Detter J.C."/>
            <person name="Halden R.U."/>
        </authorList>
    </citation>
    <scope>NUCLEOTIDE SEQUENCE [LARGE SCALE GENOMIC DNA]</scope>
    <source>
        <strain>DSM 6014 / CCUG 31198 / JCM 15750 / NBRC 105917 / EY 4224 / RW1</strain>
    </source>
</reference>
<organism>
    <name type="scientific">Rhizorhabdus wittichii (strain DSM 6014 / CCUG 31198 / JCM 15750 / NBRC 105917 / EY 4224 / RW1)</name>
    <name type="common">Sphingomonas wittichii</name>
    <dbReference type="NCBI Taxonomy" id="392499"/>
    <lineage>
        <taxon>Bacteria</taxon>
        <taxon>Pseudomonadati</taxon>
        <taxon>Pseudomonadota</taxon>
        <taxon>Alphaproteobacteria</taxon>
        <taxon>Sphingomonadales</taxon>
        <taxon>Sphingomonadaceae</taxon>
        <taxon>Rhizorhabdus</taxon>
    </lineage>
</organism>
<comment type="function">
    <text evidence="1">Catalyzes the attachment of alanine to tRNA(Ala) in a two-step reaction: alanine is first activated by ATP to form Ala-AMP and then transferred to the acceptor end of tRNA(Ala). Also edits incorrectly charged Ser-tRNA(Ala) and Gly-tRNA(Ala) via its editing domain.</text>
</comment>
<comment type="catalytic activity">
    <reaction evidence="1">
        <text>tRNA(Ala) + L-alanine + ATP = L-alanyl-tRNA(Ala) + AMP + diphosphate</text>
        <dbReference type="Rhea" id="RHEA:12540"/>
        <dbReference type="Rhea" id="RHEA-COMP:9657"/>
        <dbReference type="Rhea" id="RHEA-COMP:9923"/>
        <dbReference type="ChEBI" id="CHEBI:30616"/>
        <dbReference type="ChEBI" id="CHEBI:33019"/>
        <dbReference type="ChEBI" id="CHEBI:57972"/>
        <dbReference type="ChEBI" id="CHEBI:78442"/>
        <dbReference type="ChEBI" id="CHEBI:78497"/>
        <dbReference type="ChEBI" id="CHEBI:456215"/>
        <dbReference type="EC" id="6.1.1.7"/>
    </reaction>
</comment>
<comment type="cofactor">
    <cofactor evidence="1">
        <name>Zn(2+)</name>
        <dbReference type="ChEBI" id="CHEBI:29105"/>
    </cofactor>
    <text evidence="1">Binds 1 zinc ion per subunit.</text>
</comment>
<comment type="subcellular location">
    <subcellularLocation>
        <location evidence="1">Cytoplasm</location>
    </subcellularLocation>
</comment>
<comment type="domain">
    <text evidence="1">Consists of three domains; the N-terminal catalytic domain, the editing domain and the C-terminal C-Ala domain. The editing domain removes incorrectly charged amino acids, while the C-Ala domain, along with tRNA(Ala), serves as a bridge to cooperatively bring together the editing and aminoacylation centers thus stimulating deacylation of misacylated tRNAs.</text>
</comment>
<comment type="similarity">
    <text evidence="1">Belongs to the class-II aminoacyl-tRNA synthetase family.</text>
</comment>
<feature type="chain" id="PRO_0000347806" description="Alanine--tRNA ligase">
    <location>
        <begin position="1"/>
        <end position="887"/>
    </location>
</feature>
<feature type="region of interest" description="Disordered" evidence="2">
    <location>
        <begin position="851"/>
        <end position="871"/>
    </location>
</feature>
<feature type="compositionally biased region" description="Gly residues" evidence="2">
    <location>
        <begin position="851"/>
        <end position="866"/>
    </location>
</feature>
<feature type="binding site" evidence="1">
    <location>
        <position position="564"/>
    </location>
    <ligand>
        <name>Zn(2+)</name>
        <dbReference type="ChEBI" id="CHEBI:29105"/>
    </ligand>
</feature>
<feature type="binding site" evidence="1">
    <location>
        <position position="568"/>
    </location>
    <ligand>
        <name>Zn(2+)</name>
        <dbReference type="ChEBI" id="CHEBI:29105"/>
    </ligand>
</feature>
<feature type="binding site" evidence="1">
    <location>
        <position position="675"/>
    </location>
    <ligand>
        <name>Zn(2+)</name>
        <dbReference type="ChEBI" id="CHEBI:29105"/>
    </ligand>
</feature>
<feature type="binding site" evidence="1">
    <location>
        <position position="679"/>
    </location>
    <ligand>
        <name>Zn(2+)</name>
        <dbReference type="ChEBI" id="CHEBI:29105"/>
    </ligand>
</feature>